<sequence length="288" mass="32094">MTKKAWFLPLVCVLLISGWLAPAASASAQTTLSLNDRLASSPSGTGSLLSLAAPAAPYADTDTYYEGAEGKTGDSLKSTLHRIISGHTMLSYSEVWNALKETDEDPRNPNNVILLYTNESRSKNLNGGNVGDWNREHVWAKSHGDFGTSKGPGTDIHHLRPADVQVNSARGNMDFDNGGTEYAKAPGNYYDGDSWEPRDDVKGDVARMLFYMAVRYEGDDGYPDLELNDKTGNGSAPYHGKQSVLLEWNKQDPVDDRERKRNEIIYEKYQHNRNPFIDHPEWADEIWP</sequence>
<dbReference type="EC" id="3.1.-.-"/>
<dbReference type="EMBL" id="AL009126">
    <property type="protein sequence ID" value="CAB15244.1"/>
    <property type="molecule type" value="Genomic_DNA"/>
</dbReference>
<dbReference type="PIR" id="H70017">
    <property type="entry name" value="H70017"/>
</dbReference>
<dbReference type="RefSeq" id="WP_009968119.1">
    <property type="nucleotide sequence ID" value="NZ_OZ025638.1"/>
</dbReference>
<dbReference type="FunCoup" id="O32150">
    <property type="interactions" value="7"/>
</dbReference>
<dbReference type="STRING" id="224308.BSU32540"/>
<dbReference type="PaxDb" id="224308-BSU32540"/>
<dbReference type="EnsemblBacteria" id="CAB15244">
    <property type="protein sequence ID" value="CAB15244"/>
    <property type="gene ID" value="BSU_32540"/>
</dbReference>
<dbReference type="GeneID" id="936687"/>
<dbReference type="KEGG" id="bsu:BSU32540"/>
<dbReference type="PATRIC" id="fig|224308.179.peg.3524"/>
<dbReference type="eggNOG" id="COG2356">
    <property type="taxonomic scope" value="Bacteria"/>
</dbReference>
<dbReference type="InParanoid" id="O32150"/>
<dbReference type="OrthoDB" id="9801679at2"/>
<dbReference type="PhylomeDB" id="O32150"/>
<dbReference type="BioCyc" id="BSUB:BSU32540-MONOMER"/>
<dbReference type="Proteomes" id="UP000001570">
    <property type="component" value="Chromosome"/>
</dbReference>
<dbReference type="GO" id="GO:0005576">
    <property type="term" value="C:extracellular region"/>
    <property type="evidence" value="ECO:0007669"/>
    <property type="project" value="UniProtKB-SubCell"/>
</dbReference>
<dbReference type="GO" id="GO:0004536">
    <property type="term" value="F:DNA nuclease activity"/>
    <property type="evidence" value="ECO:0000318"/>
    <property type="project" value="GO_Central"/>
</dbReference>
<dbReference type="GO" id="GO:0006308">
    <property type="term" value="P:DNA catabolic process"/>
    <property type="evidence" value="ECO:0000318"/>
    <property type="project" value="GO_Central"/>
</dbReference>
<dbReference type="InterPro" id="IPR007346">
    <property type="entry name" value="Endonuclease-I"/>
</dbReference>
<dbReference type="InterPro" id="IPR044925">
    <property type="entry name" value="His-Me_finger_sf"/>
</dbReference>
<dbReference type="PANTHER" id="PTHR33607">
    <property type="entry name" value="ENDONUCLEASE-1"/>
    <property type="match status" value="1"/>
</dbReference>
<dbReference type="PANTHER" id="PTHR33607:SF2">
    <property type="entry name" value="ENDONUCLEASE-1"/>
    <property type="match status" value="1"/>
</dbReference>
<dbReference type="Pfam" id="PF04231">
    <property type="entry name" value="Endonuclease_1"/>
    <property type="match status" value="1"/>
</dbReference>
<dbReference type="SUPFAM" id="SSF54060">
    <property type="entry name" value="His-Me finger endonucleases"/>
    <property type="match status" value="1"/>
</dbReference>
<protein>
    <recommendedName>
        <fullName>Extracellular ribonuclease</fullName>
        <ecNumber>3.1.-.-</ecNumber>
    </recommendedName>
</protein>
<proteinExistence type="inferred from homology"/>
<gene>
    <name type="primary">bsn</name>
    <name type="synonym">yurI</name>
    <name type="ordered locus">BSU32540</name>
</gene>
<organism>
    <name type="scientific">Bacillus subtilis (strain 168)</name>
    <dbReference type="NCBI Taxonomy" id="224308"/>
    <lineage>
        <taxon>Bacteria</taxon>
        <taxon>Bacillati</taxon>
        <taxon>Bacillota</taxon>
        <taxon>Bacilli</taxon>
        <taxon>Bacillales</taxon>
        <taxon>Bacillaceae</taxon>
        <taxon>Bacillus</taxon>
    </lineage>
</organism>
<feature type="signal peptide" evidence="2">
    <location>
        <begin position="1"/>
        <end position="26"/>
    </location>
</feature>
<feature type="chain" id="PRO_0000020832" description="Extracellular ribonuclease">
    <location>
        <begin position="27"/>
        <end position="288"/>
    </location>
</feature>
<comment type="function">
    <text evidence="1">Mg(2+)-activated ribonuclease which hydrolyzes RNA apparently nonspecifically into oligonucleotides with 5'-terminal phosphate.</text>
</comment>
<comment type="subcellular location">
    <subcellularLocation>
        <location evidence="1">Secreted</location>
    </subcellularLocation>
</comment>
<evidence type="ECO:0000250" key="1"/>
<evidence type="ECO:0000255" key="2"/>
<reference key="1">
    <citation type="journal article" date="1997" name="Nature">
        <title>The complete genome sequence of the Gram-positive bacterium Bacillus subtilis.</title>
        <authorList>
            <person name="Kunst F."/>
            <person name="Ogasawara N."/>
            <person name="Moszer I."/>
            <person name="Albertini A.M."/>
            <person name="Alloni G."/>
            <person name="Azevedo V."/>
            <person name="Bertero M.G."/>
            <person name="Bessieres P."/>
            <person name="Bolotin A."/>
            <person name="Borchert S."/>
            <person name="Borriss R."/>
            <person name="Boursier L."/>
            <person name="Brans A."/>
            <person name="Braun M."/>
            <person name="Brignell S.C."/>
            <person name="Bron S."/>
            <person name="Brouillet S."/>
            <person name="Bruschi C.V."/>
            <person name="Caldwell B."/>
            <person name="Capuano V."/>
            <person name="Carter N.M."/>
            <person name="Choi S.-K."/>
            <person name="Codani J.-J."/>
            <person name="Connerton I.F."/>
            <person name="Cummings N.J."/>
            <person name="Daniel R.A."/>
            <person name="Denizot F."/>
            <person name="Devine K.M."/>
            <person name="Duesterhoeft A."/>
            <person name="Ehrlich S.D."/>
            <person name="Emmerson P.T."/>
            <person name="Entian K.-D."/>
            <person name="Errington J."/>
            <person name="Fabret C."/>
            <person name="Ferrari E."/>
            <person name="Foulger D."/>
            <person name="Fritz C."/>
            <person name="Fujita M."/>
            <person name="Fujita Y."/>
            <person name="Fuma S."/>
            <person name="Galizzi A."/>
            <person name="Galleron N."/>
            <person name="Ghim S.-Y."/>
            <person name="Glaser P."/>
            <person name="Goffeau A."/>
            <person name="Golightly E.J."/>
            <person name="Grandi G."/>
            <person name="Guiseppi G."/>
            <person name="Guy B.J."/>
            <person name="Haga K."/>
            <person name="Haiech J."/>
            <person name="Harwood C.R."/>
            <person name="Henaut A."/>
            <person name="Hilbert H."/>
            <person name="Holsappel S."/>
            <person name="Hosono S."/>
            <person name="Hullo M.-F."/>
            <person name="Itaya M."/>
            <person name="Jones L.-M."/>
            <person name="Joris B."/>
            <person name="Karamata D."/>
            <person name="Kasahara Y."/>
            <person name="Klaerr-Blanchard M."/>
            <person name="Klein C."/>
            <person name="Kobayashi Y."/>
            <person name="Koetter P."/>
            <person name="Koningstein G."/>
            <person name="Krogh S."/>
            <person name="Kumano M."/>
            <person name="Kurita K."/>
            <person name="Lapidus A."/>
            <person name="Lardinois S."/>
            <person name="Lauber J."/>
            <person name="Lazarevic V."/>
            <person name="Lee S.-M."/>
            <person name="Levine A."/>
            <person name="Liu H."/>
            <person name="Masuda S."/>
            <person name="Mauel C."/>
            <person name="Medigue C."/>
            <person name="Medina N."/>
            <person name="Mellado R.P."/>
            <person name="Mizuno M."/>
            <person name="Moestl D."/>
            <person name="Nakai S."/>
            <person name="Noback M."/>
            <person name="Noone D."/>
            <person name="O'Reilly M."/>
            <person name="Ogawa K."/>
            <person name="Ogiwara A."/>
            <person name="Oudega B."/>
            <person name="Park S.-H."/>
            <person name="Parro V."/>
            <person name="Pohl T.M."/>
            <person name="Portetelle D."/>
            <person name="Porwollik S."/>
            <person name="Prescott A.M."/>
            <person name="Presecan E."/>
            <person name="Pujic P."/>
            <person name="Purnelle B."/>
            <person name="Rapoport G."/>
            <person name="Rey M."/>
            <person name="Reynolds S."/>
            <person name="Rieger M."/>
            <person name="Rivolta C."/>
            <person name="Rocha E."/>
            <person name="Roche B."/>
            <person name="Rose M."/>
            <person name="Sadaie Y."/>
            <person name="Sato T."/>
            <person name="Scanlan E."/>
            <person name="Schleich S."/>
            <person name="Schroeter R."/>
            <person name="Scoffone F."/>
            <person name="Sekiguchi J."/>
            <person name="Sekowska A."/>
            <person name="Seror S.J."/>
            <person name="Serror P."/>
            <person name="Shin B.-S."/>
            <person name="Soldo B."/>
            <person name="Sorokin A."/>
            <person name="Tacconi E."/>
            <person name="Takagi T."/>
            <person name="Takahashi H."/>
            <person name="Takemaru K."/>
            <person name="Takeuchi M."/>
            <person name="Tamakoshi A."/>
            <person name="Tanaka T."/>
            <person name="Terpstra P."/>
            <person name="Tognoni A."/>
            <person name="Tosato V."/>
            <person name="Uchiyama S."/>
            <person name="Vandenbol M."/>
            <person name="Vannier F."/>
            <person name="Vassarotti A."/>
            <person name="Viari A."/>
            <person name="Wambutt R."/>
            <person name="Wedler E."/>
            <person name="Wedler H."/>
            <person name="Weitzenegger T."/>
            <person name="Winters P."/>
            <person name="Wipat A."/>
            <person name="Yamamoto H."/>
            <person name="Yamane K."/>
            <person name="Yasumoto K."/>
            <person name="Yata K."/>
            <person name="Yoshida K."/>
            <person name="Yoshikawa H.-F."/>
            <person name="Zumstein E."/>
            <person name="Yoshikawa H."/>
            <person name="Danchin A."/>
        </authorList>
    </citation>
    <scope>NUCLEOTIDE SEQUENCE [LARGE SCALE GENOMIC DNA]</scope>
    <source>
        <strain>168</strain>
    </source>
</reference>
<accession>O32150</accession>
<keyword id="KW-0378">Hydrolase</keyword>
<keyword id="KW-0540">Nuclease</keyword>
<keyword id="KW-1185">Reference proteome</keyword>
<keyword id="KW-0964">Secreted</keyword>
<keyword id="KW-0732">Signal</keyword>
<name>BSN2_BACSU</name>